<sequence length="76" mass="8397">MFTLKKSMLLLFFLGTISLSLCEEERSADEDDGEKEVKRGIFSLIKTAAKFVGKNLLKQAGKAGMEHLACKANNQC</sequence>
<reference evidence="5" key="1">
    <citation type="journal article" date="2014" name="Zool. Sci.">
        <title>Peptidomic analysis of antimicrobial peptides in skin secretions of Amolops mantzorum.</title>
        <authorList>
            <person name="Hu Y."/>
            <person name="Yu Z."/>
            <person name="Xu S."/>
            <person name="Hu Y."/>
            <person name="Guo C."/>
            <person name="Li F."/>
            <person name="Li J."/>
            <person name="Liu J."/>
            <person name="Wang H."/>
        </authorList>
    </citation>
    <scope>NUCLEOTIDE SEQUENCE [MRNA]</scope>
    <scope>PROTEIN SEQUENCE OF 40-76</scope>
    <scope>FUNCTION</scope>
    <scope>SUBCELLULAR LOCATION</scope>
    <scope>SYNTHESIS OF 40-76</scope>
    <scope>IDENTIFICATION BY MASS SPECTROMETRY</scope>
    <scope>DISULFIDE BOND</scope>
    <source>
        <tissue evidence="3">Skin</tissue>
        <tissue evidence="3">Skin secretion</tissue>
    </source>
</reference>
<dbReference type="EMBL" id="HQ128617">
    <property type="protein sequence ID" value="ADM34275.1"/>
    <property type="molecule type" value="mRNA"/>
</dbReference>
<dbReference type="SMR" id="E1B242"/>
<dbReference type="GO" id="GO:0005576">
    <property type="term" value="C:extracellular region"/>
    <property type="evidence" value="ECO:0007669"/>
    <property type="project" value="UniProtKB-SubCell"/>
</dbReference>
<dbReference type="GO" id="GO:0042742">
    <property type="term" value="P:defense response to bacterium"/>
    <property type="evidence" value="ECO:0007669"/>
    <property type="project" value="UniProtKB-KW"/>
</dbReference>
<dbReference type="GO" id="GO:0050832">
    <property type="term" value="P:defense response to fungus"/>
    <property type="evidence" value="ECO:0007669"/>
    <property type="project" value="UniProtKB-KW"/>
</dbReference>
<dbReference type="GO" id="GO:0031640">
    <property type="term" value="P:killing of cells of another organism"/>
    <property type="evidence" value="ECO:0007669"/>
    <property type="project" value="UniProtKB-KW"/>
</dbReference>
<dbReference type="InterPro" id="IPR012521">
    <property type="entry name" value="Antimicrobial_frog_2"/>
</dbReference>
<dbReference type="InterPro" id="IPR004275">
    <property type="entry name" value="Frog_antimicrobial_propeptide"/>
</dbReference>
<dbReference type="Pfam" id="PF08023">
    <property type="entry name" value="Antimicrobial_2"/>
    <property type="match status" value="1"/>
</dbReference>
<dbReference type="Pfam" id="PF03032">
    <property type="entry name" value="FSAP_sig_propep"/>
    <property type="match status" value="1"/>
</dbReference>
<proteinExistence type="evidence at protein level"/>
<evidence type="ECO:0000255" key="1"/>
<evidence type="ECO:0000269" key="2">
    <source>
    </source>
</evidence>
<evidence type="ECO:0000303" key="3">
    <source>
    </source>
</evidence>
<evidence type="ECO:0000305" key="4">
    <source>
    </source>
</evidence>
<evidence type="ECO:0000312" key="5">
    <source>
        <dbReference type="EMBL" id="ADM34275.1"/>
    </source>
</evidence>
<feature type="signal peptide" evidence="1">
    <location>
        <begin position="1"/>
        <end position="22"/>
    </location>
</feature>
<feature type="propeptide" id="PRO_0000440082" description="Removed in mature form" evidence="4">
    <location>
        <begin position="23"/>
        <end position="37"/>
    </location>
</feature>
<feature type="peptide" id="PRO_0000440083" description="Esculentin-2MT2" evidence="2">
    <location>
        <begin position="40"/>
        <end position="76"/>
    </location>
</feature>
<feature type="disulfide bond" evidence="2">
    <location>
        <begin position="70"/>
        <end position="76"/>
    </location>
</feature>
<protein>
    <recommendedName>
        <fullName evidence="3">Esculentin-2MT2</fullName>
    </recommendedName>
</protein>
<comment type="function">
    <text evidence="2">Antimicrobial peptide. Active against a variety of Gram-negative and Gram-positive bacterial strains. Active against fungi. Shows strong hemolytic activity against human erythrocytes.</text>
</comment>
<comment type="subcellular location">
    <subcellularLocation>
        <location evidence="1 2">Secreted</location>
    </subcellularLocation>
</comment>
<comment type="tissue specificity">
    <text evidence="4">Expressed by the skin glands.</text>
</comment>
<comment type="similarity">
    <text evidence="1">Belongs to the frog skin active peptide (FSAP) family. Esculentin subfamily.</text>
</comment>
<accession>E1B242</accession>
<keyword id="KW-0878">Amphibian defense peptide</keyword>
<keyword id="KW-0044">Antibiotic</keyword>
<keyword id="KW-0929">Antimicrobial</keyword>
<keyword id="KW-0165">Cleavage on pair of basic residues</keyword>
<keyword id="KW-0204">Cytolysis</keyword>
<keyword id="KW-0903">Direct protein sequencing</keyword>
<keyword id="KW-1015">Disulfide bond</keyword>
<keyword id="KW-0295">Fungicide</keyword>
<keyword id="KW-0354">Hemolysis</keyword>
<keyword id="KW-0964">Secreted</keyword>
<keyword id="KW-0732">Signal</keyword>
<organism evidence="5">
    <name type="scientific">Amolops mantzorum</name>
    <name type="common">Sichuan torrent frog</name>
    <dbReference type="NCBI Taxonomy" id="167930"/>
    <lineage>
        <taxon>Eukaryota</taxon>
        <taxon>Metazoa</taxon>
        <taxon>Chordata</taxon>
        <taxon>Craniata</taxon>
        <taxon>Vertebrata</taxon>
        <taxon>Euteleostomi</taxon>
        <taxon>Amphibia</taxon>
        <taxon>Batrachia</taxon>
        <taxon>Anura</taxon>
        <taxon>Neobatrachia</taxon>
        <taxon>Ranoidea</taxon>
        <taxon>Ranidae</taxon>
        <taxon>Amolops</taxon>
    </lineage>
</organism>
<name>E2MT2_AMOMA</name>